<reference key="1">
    <citation type="submission" date="1999-10" db="EMBL/GenBank/DDBJ databases">
        <title>Human mRNA for RAB23 protein.</title>
        <authorList>
            <person name="Seki N."/>
            <person name="Yoshikawa T."/>
            <person name="Azuma T."/>
            <person name="Saito T."/>
            <person name="Muramatsu M."/>
        </authorList>
    </citation>
    <scope>NUCLEOTIDE SEQUENCE [MRNA]</scope>
    <source>
        <tissue>Fetal brain</tissue>
    </source>
</reference>
<reference key="2">
    <citation type="submission" date="1999-03" db="EMBL/GenBank/DDBJ databases">
        <title>Expression of RAB-23 in human hair follicle.</title>
        <authorList>
            <person name="Ikeda A."/>
            <person name="Yamashita M."/>
        </authorList>
    </citation>
    <scope>NUCLEOTIDE SEQUENCE [MRNA]</scope>
    <source>
        <tissue>Hair follicle</tissue>
    </source>
</reference>
<reference key="3">
    <citation type="journal article" date="2000" name="Genome Res.">
        <title>Cloning and functional analysis of cDNAs with open reading frames for 300 previously undefined genes expressed in CD34+ hematopoietic stem/progenitor cells.</title>
        <authorList>
            <person name="Zhang Q.-H."/>
            <person name="Ye M."/>
            <person name="Wu X.-Y."/>
            <person name="Ren S.-X."/>
            <person name="Zhao M."/>
            <person name="Zhao C.-J."/>
            <person name="Fu G."/>
            <person name="Shen Y."/>
            <person name="Fan H.-Y."/>
            <person name="Lu G."/>
            <person name="Zhong M."/>
            <person name="Xu X.-R."/>
            <person name="Han Z.-G."/>
            <person name="Zhang J.-W."/>
            <person name="Tao J."/>
            <person name="Huang Q.-H."/>
            <person name="Zhou J."/>
            <person name="Hu G.-X."/>
            <person name="Gu J."/>
            <person name="Chen S.-J."/>
            <person name="Chen Z."/>
        </authorList>
    </citation>
    <scope>NUCLEOTIDE SEQUENCE [LARGE SCALE MRNA]</scope>
    <source>
        <tissue>Umbilical cord blood</tissue>
    </source>
</reference>
<reference key="4">
    <citation type="journal article" date="2004" name="Nat. Genet.">
        <title>Complete sequencing and characterization of 21,243 full-length human cDNAs.</title>
        <authorList>
            <person name="Ota T."/>
            <person name="Suzuki Y."/>
            <person name="Nishikawa T."/>
            <person name="Otsuki T."/>
            <person name="Sugiyama T."/>
            <person name="Irie R."/>
            <person name="Wakamatsu A."/>
            <person name="Hayashi K."/>
            <person name="Sato H."/>
            <person name="Nagai K."/>
            <person name="Kimura K."/>
            <person name="Makita H."/>
            <person name="Sekine M."/>
            <person name="Obayashi M."/>
            <person name="Nishi T."/>
            <person name="Shibahara T."/>
            <person name="Tanaka T."/>
            <person name="Ishii S."/>
            <person name="Yamamoto J."/>
            <person name="Saito K."/>
            <person name="Kawai Y."/>
            <person name="Isono Y."/>
            <person name="Nakamura Y."/>
            <person name="Nagahari K."/>
            <person name="Murakami K."/>
            <person name="Yasuda T."/>
            <person name="Iwayanagi T."/>
            <person name="Wagatsuma M."/>
            <person name="Shiratori A."/>
            <person name="Sudo H."/>
            <person name="Hosoiri T."/>
            <person name="Kaku Y."/>
            <person name="Kodaira H."/>
            <person name="Kondo H."/>
            <person name="Sugawara M."/>
            <person name="Takahashi M."/>
            <person name="Kanda K."/>
            <person name="Yokoi T."/>
            <person name="Furuya T."/>
            <person name="Kikkawa E."/>
            <person name="Omura Y."/>
            <person name="Abe K."/>
            <person name="Kamihara K."/>
            <person name="Katsuta N."/>
            <person name="Sato K."/>
            <person name="Tanikawa M."/>
            <person name="Yamazaki M."/>
            <person name="Ninomiya K."/>
            <person name="Ishibashi T."/>
            <person name="Yamashita H."/>
            <person name="Murakawa K."/>
            <person name="Fujimori K."/>
            <person name="Tanai H."/>
            <person name="Kimata M."/>
            <person name="Watanabe M."/>
            <person name="Hiraoka S."/>
            <person name="Chiba Y."/>
            <person name="Ishida S."/>
            <person name="Ono Y."/>
            <person name="Takiguchi S."/>
            <person name="Watanabe S."/>
            <person name="Yosida M."/>
            <person name="Hotuta T."/>
            <person name="Kusano J."/>
            <person name="Kanehori K."/>
            <person name="Takahashi-Fujii A."/>
            <person name="Hara H."/>
            <person name="Tanase T.-O."/>
            <person name="Nomura Y."/>
            <person name="Togiya S."/>
            <person name="Komai F."/>
            <person name="Hara R."/>
            <person name="Takeuchi K."/>
            <person name="Arita M."/>
            <person name="Imose N."/>
            <person name="Musashino K."/>
            <person name="Yuuki H."/>
            <person name="Oshima A."/>
            <person name="Sasaki N."/>
            <person name="Aotsuka S."/>
            <person name="Yoshikawa Y."/>
            <person name="Matsunawa H."/>
            <person name="Ichihara T."/>
            <person name="Shiohata N."/>
            <person name="Sano S."/>
            <person name="Moriya S."/>
            <person name="Momiyama H."/>
            <person name="Satoh N."/>
            <person name="Takami S."/>
            <person name="Terashima Y."/>
            <person name="Suzuki O."/>
            <person name="Nakagawa S."/>
            <person name="Senoh A."/>
            <person name="Mizoguchi H."/>
            <person name="Goto Y."/>
            <person name="Shimizu F."/>
            <person name="Wakebe H."/>
            <person name="Hishigaki H."/>
            <person name="Watanabe T."/>
            <person name="Sugiyama A."/>
            <person name="Takemoto M."/>
            <person name="Kawakami B."/>
            <person name="Yamazaki M."/>
            <person name="Watanabe K."/>
            <person name="Kumagai A."/>
            <person name="Itakura S."/>
            <person name="Fukuzumi Y."/>
            <person name="Fujimori Y."/>
            <person name="Komiyama M."/>
            <person name="Tashiro H."/>
            <person name="Tanigami A."/>
            <person name="Fujiwara T."/>
            <person name="Ono T."/>
            <person name="Yamada K."/>
            <person name="Fujii Y."/>
            <person name="Ozaki K."/>
            <person name="Hirao M."/>
            <person name="Ohmori Y."/>
            <person name="Kawabata A."/>
            <person name="Hikiji T."/>
            <person name="Kobatake N."/>
            <person name="Inagaki H."/>
            <person name="Ikema Y."/>
            <person name="Okamoto S."/>
            <person name="Okitani R."/>
            <person name="Kawakami T."/>
            <person name="Noguchi S."/>
            <person name="Itoh T."/>
            <person name="Shigeta K."/>
            <person name="Senba T."/>
            <person name="Matsumura K."/>
            <person name="Nakajima Y."/>
            <person name="Mizuno T."/>
            <person name="Morinaga M."/>
            <person name="Sasaki M."/>
            <person name="Togashi T."/>
            <person name="Oyama M."/>
            <person name="Hata H."/>
            <person name="Watanabe M."/>
            <person name="Komatsu T."/>
            <person name="Mizushima-Sugano J."/>
            <person name="Satoh T."/>
            <person name="Shirai Y."/>
            <person name="Takahashi Y."/>
            <person name="Nakagawa K."/>
            <person name="Okumura K."/>
            <person name="Nagase T."/>
            <person name="Nomura N."/>
            <person name="Kikuchi H."/>
            <person name="Masuho Y."/>
            <person name="Yamashita R."/>
            <person name="Nakai K."/>
            <person name="Yada T."/>
            <person name="Nakamura Y."/>
            <person name="Ohara O."/>
            <person name="Isogai T."/>
            <person name="Sugano S."/>
        </authorList>
    </citation>
    <scope>NUCLEOTIDE SEQUENCE [LARGE SCALE MRNA]</scope>
    <scope>VARIANT SER-207</scope>
</reference>
<reference key="5">
    <citation type="submission" date="2004-03" db="EMBL/GenBank/DDBJ databases">
        <title>cDNA clones of human proteins involved in signal transduction sequenced by the Guthrie cDNA resource center (www.cdna.org).</title>
        <authorList>
            <person name="Puhl H.L. III"/>
            <person name="Ikeda S.R."/>
            <person name="Aronstam R.S."/>
        </authorList>
    </citation>
    <scope>NUCLEOTIDE SEQUENCE [LARGE SCALE MRNA]</scope>
    <scope>VARIANT SER-207</scope>
    <source>
        <tissue>Brain</tissue>
    </source>
</reference>
<reference key="6">
    <citation type="journal article" date="2007" name="BMC Genomics">
        <title>The full-ORF clone resource of the German cDNA consortium.</title>
        <authorList>
            <person name="Bechtel S."/>
            <person name="Rosenfelder H."/>
            <person name="Duda A."/>
            <person name="Schmidt C.P."/>
            <person name="Ernst U."/>
            <person name="Wellenreuther R."/>
            <person name="Mehrle A."/>
            <person name="Schuster C."/>
            <person name="Bahr A."/>
            <person name="Bloecker H."/>
            <person name="Heubner D."/>
            <person name="Hoerlein A."/>
            <person name="Michel G."/>
            <person name="Wedler H."/>
            <person name="Koehrer K."/>
            <person name="Ottenwaelder B."/>
            <person name="Poustka A."/>
            <person name="Wiemann S."/>
            <person name="Schupp I."/>
        </authorList>
    </citation>
    <scope>NUCLEOTIDE SEQUENCE [LARGE SCALE MRNA]</scope>
    <source>
        <tissue>Colon carcinoma</tissue>
    </source>
</reference>
<reference key="7">
    <citation type="journal article" date="2003" name="Nature">
        <title>The DNA sequence and analysis of human chromosome 6.</title>
        <authorList>
            <person name="Mungall A.J."/>
            <person name="Palmer S.A."/>
            <person name="Sims S.K."/>
            <person name="Edwards C.A."/>
            <person name="Ashurst J.L."/>
            <person name="Wilming L."/>
            <person name="Jones M.C."/>
            <person name="Horton R."/>
            <person name="Hunt S.E."/>
            <person name="Scott C.E."/>
            <person name="Gilbert J.G.R."/>
            <person name="Clamp M.E."/>
            <person name="Bethel G."/>
            <person name="Milne S."/>
            <person name="Ainscough R."/>
            <person name="Almeida J.P."/>
            <person name="Ambrose K.D."/>
            <person name="Andrews T.D."/>
            <person name="Ashwell R.I.S."/>
            <person name="Babbage A.K."/>
            <person name="Bagguley C.L."/>
            <person name="Bailey J."/>
            <person name="Banerjee R."/>
            <person name="Barker D.J."/>
            <person name="Barlow K.F."/>
            <person name="Bates K."/>
            <person name="Beare D.M."/>
            <person name="Beasley H."/>
            <person name="Beasley O."/>
            <person name="Bird C.P."/>
            <person name="Blakey S.E."/>
            <person name="Bray-Allen S."/>
            <person name="Brook J."/>
            <person name="Brown A.J."/>
            <person name="Brown J.Y."/>
            <person name="Burford D.C."/>
            <person name="Burrill W."/>
            <person name="Burton J."/>
            <person name="Carder C."/>
            <person name="Carter N.P."/>
            <person name="Chapman J.C."/>
            <person name="Clark S.Y."/>
            <person name="Clark G."/>
            <person name="Clee C.M."/>
            <person name="Clegg S."/>
            <person name="Cobley V."/>
            <person name="Collier R.E."/>
            <person name="Collins J.E."/>
            <person name="Colman L.K."/>
            <person name="Corby N.R."/>
            <person name="Coville G.J."/>
            <person name="Culley K.M."/>
            <person name="Dhami P."/>
            <person name="Davies J."/>
            <person name="Dunn M."/>
            <person name="Earthrowl M.E."/>
            <person name="Ellington A.E."/>
            <person name="Evans K.A."/>
            <person name="Faulkner L."/>
            <person name="Francis M.D."/>
            <person name="Frankish A."/>
            <person name="Frankland J."/>
            <person name="French L."/>
            <person name="Garner P."/>
            <person name="Garnett J."/>
            <person name="Ghori M.J."/>
            <person name="Gilby L.M."/>
            <person name="Gillson C.J."/>
            <person name="Glithero R.J."/>
            <person name="Grafham D.V."/>
            <person name="Grant M."/>
            <person name="Gribble S."/>
            <person name="Griffiths C."/>
            <person name="Griffiths M.N.D."/>
            <person name="Hall R."/>
            <person name="Halls K.S."/>
            <person name="Hammond S."/>
            <person name="Harley J.L."/>
            <person name="Hart E.A."/>
            <person name="Heath P.D."/>
            <person name="Heathcott R."/>
            <person name="Holmes S.J."/>
            <person name="Howden P.J."/>
            <person name="Howe K.L."/>
            <person name="Howell G.R."/>
            <person name="Huckle E."/>
            <person name="Humphray S.J."/>
            <person name="Humphries M.D."/>
            <person name="Hunt A.R."/>
            <person name="Johnson C.M."/>
            <person name="Joy A.A."/>
            <person name="Kay M."/>
            <person name="Keenan S.J."/>
            <person name="Kimberley A.M."/>
            <person name="King A."/>
            <person name="Laird G.K."/>
            <person name="Langford C."/>
            <person name="Lawlor S."/>
            <person name="Leongamornlert D.A."/>
            <person name="Leversha M."/>
            <person name="Lloyd C.R."/>
            <person name="Lloyd D.M."/>
            <person name="Loveland J.E."/>
            <person name="Lovell J."/>
            <person name="Martin S."/>
            <person name="Mashreghi-Mohammadi M."/>
            <person name="Maslen G.L."/>
            <person name="Matthews L."/>
            <person name="McCann O.T."/>
            <person name="McLaren S.J."/>
            <person name="McLay K."/>
            <person name="McMurray A."/>
            <person name="Moore M.J.F."/>
            <person name="Mullikin J.C."/>
            <person name="Niblett D."/>
            <person name="Nickerson T."/>
            <person name="Novik K.L."/>
            <person name="Oliver K."/>
            <person name="Overton-Larty E.K."/>
            <person name="Parker A."/>
            <person name="Patel R."/>
            <person name="Pearce A.V."/>
            <person name="Peck A.I."/>
            <person name="Phillimore B.J.C.T."/>
            <person name="Phillips S."/>
            <person name="Plumb R.W."/>
            <person name="Porter K.M."/>
            <person name="Ramsey Y."/>
            <person name="Ranby S.A."/>
            <person name="Rice C.M."/>
            <person name="Ross M.T."/>
            <person name="Searle S.M."/>
            <person name="Sehra H.K."/>
            <person name="Sheridan E."/>
            <person name="Skuce C.D."/>
            <person name="Smith S."/>
            <person name="Smith M."/>
            <person name="Spraggon L."/>
            <person name="Squares S.L."/>
            <person name="Steward C.A."/>
            <person name="Sycamore N."/>
            <person name="Tamlyn-Hall G."/>
            <person name="Tester J."/>
            <person name="Theaker A.J."/>
            <person name="Thomas D.W."/>
            <person name="Thorpe A."/>
            <person name="Tracey A."/>
            <person name="Tromans A."/>
            <person name="Tubby B."/>
            <person name="Wall M."/>
            <person name="Wallis J.M."/>
            <person name="West A.P."/>
            <person name="White S.S."/>
            <person name="Whitehead S.L."/>
            <person name="Whittaker H."/>
            <person name="Wild A."/>
            <person name="Willey D.J."/>
            <person name="Wilmer T.E."/>
            <person name="Wood J.M."/>
            <person name="Wray P.W."/>
            <person name="Wyatt J.C."/>
            <person name="Young L."/>
            <person name="Younger R.M."/>
            <person name="Bentley D.R."/>
            <person name="Coulson A."/>
            <person name="Durbin R.M."/>
            <person name="Hubbard T."/>
            <person name="Sulston J.E."/>
            <person name="Dunham I."/>
            <person name="Rogers J."/>
            <person name="Beck S."/>
        </authorList>
    </citation>
    <scope>NUCLEOTIDE SEQUENCE [LARGE SCALE GENOMIC DNA]</scope>
</reference>
<reference key="8">
    <citation type="submission" date="2005-07" db="EMBL/GenBank/DDBJ databases">
        <authorList>
            <person name="Mural R.J."/>
            <person name="Istrail S."/>
            <person name="Sutton G.G."/>
            <person name="Florea L."/>
            <person name="Halpern A.L."/>
            <person name="Mobarry C.M."/>
            <person name="Lippert R."/>
            <person name="Walenz B."/>
            <person name="Shatkay H."/>
            <person name="Dew I."/>
            <person name="Miller J.R."/>
            <person name="Flanigan M.J."/>
            <person name="Edwards N.J."/>
            <person name="Bolanos R."/>
            <person name="Fasulo D."/>
            <person name="Halldorsson B.V."/>
            <person name="Hannenhalli S."/>
            <person name="Turner R."/>
            <person name="Yooseph S."/>
            <person name="Lu F."/>
            <person name="Nusskern D.R."/>
            <person name="Shue B.C."/>
            <person name="Zheng X.H."/>
            <person name="Zhong F."/>
            <person name="Delcher A.L."/>
            <person name="Huson D.H."/>
            <person name="Kravitz S.A."/>
            <person name="Mouchard L."/>
            <person name="Reinert K."/>
            <person name="Remington K.A."/>
            <person name="Clark A.G."/>
            <person name="Waterman M.S."/>
            <person name="Eichler E.E."/>
            <person name="Adams M.D."/>
            <person name="Hunkapiller M.W."/>
            <person name="Myers E.W."/>
            <person name="Venter J.C."/>
        </authorList>
    </citation>
    <scope>NUCLEOTIDE SEQUENCE [LARGE SCALE GENOMIC DNA]</scope>
</reference>
<reference key="9">
    <citation type="journal article" date="2004" name="Genome Res.">
        <title>The status, quality, and expansion of the NIH full-length cDNA project: the Mammalian Gene Collection (MGC).</title>
        <authorList>
            <consortium name="The MGC Project Team"/>
        </authorList>
    </citation>
    <scope>NUCLEOTIDE SEQUENCE [LARGE SCALE MRNA]</scope>
    <source>
        <tissue>Uterus</tissue>
    </source>
</reference>
<reference key="10">
    <citation type="journal article" date="2011" name="BMC Syst. Biol.">
        <title>Initial characterization of the human central proteome.</title>
        <authorList>
            <person name="Burkard T.R."/>
            <person name="Planyavsky M."/>
            <person name="Kaupe I."/>
            <person name="Breitwieser F.P."/>
            <person name="Buerckstuemmer T."/>
            <person name="Bennett K.L."/>
            <person name="Superti-Furga G."/>
            <person name="Colinge J."/>
        </authorList>
    </citation>
    <scope>IDENTIFICATION BY MASS SPECTROMETRY [LARGE SCALE ANALYSIS]</scope>
</reference>
<reference key="11">
    <citation type="journal article" date="2011" name="Traffic">
        <title>Rab GTPases regulating phagosome maturation are differentially recruited to mycobacterial phagosomes.</title>
        <authorList>
            <person name="Seto S."/>
            <person name="Tsujimura K."/>
            <person name="Koide Y."/>
        </authorList>
    </citation>
    <scope>SUBCELLULAR LOCATION</scope>
</reference>
<reference key="12">
    <citation type="journal article" date="2012" name="Cell. Microbiol.">
        <title>The small GTPases Rab9A and Rab23 function at distinct steps in autophagy during group A Streptococcus infection.</title>
        <authorList>
            <person name="Nozawa T."/>
            <person name="Aikawa C."/>
            <person name="Goda A."/>
            <person name="Maruyama F."/>
            <person name="Hamada S."/>
            <person name="Nakagawa I."/>
        </authorList>
    </citation>
    <scope>FUNCTION</scope>
    <scope>SUBCELLULAR LOCATION</scope>
</reference>
<reference key="13">
    <citation type="journal article" date="2012" name="Cell. Signal.">
        <title>Rab23 negatively regulates Gli1 transcriptional factor in a Su(Fu)-dependent manner.</title>
        <authorList>
            <person name="Chi S."/>
            <person name="Xie G."/>
            <person name="Liu H."/>
            <person name="Chen K."/>
            <person name="Zhang X."/>
            <person name="Li C."/>
            <person name="Xie J."/>
        </authorList>
    </citation>
    <scope>INTERACTION WITH SUFU</scope>
    <scope>FUNCTION</scope>
    <scope>CATALYTIC ACTIVITY</scope>
    <scope>SUBCELLULAR LOCATION</scope>
</reference>
<reference key="14">
    <citation type="journal article" date="2013" name="J. Proteome Res.">
        <title>Toward a comprehensive characterization of a human cancer cell phosphoproteome.</title>
        <authorList>
            <person name="Zhou H."/>
            <person name="Di Palma S."/>
            <person name="Preisinger C."/>
            <person name="Peng M."/>
            <person name="Polat A.N."/>
            <person name="Heck A.J."/>
            <person name="Mohammed S."/>
        </authorList>
    </citation>
    <scope>PHOSPHORYLATION [LARGE SCALE ANALYSIS] AT SER-186 AND SER-187</scope>
    <scope>IDENTIFICATION BY MASS SPECTROMETRY [LARGE SCALE ANALYSIS]</scope>
    <source>
        <tissue>Cervix carcinoma</tissue>
        <tissue>Erythroleukemia</tissue>
    </source>
</reference>
<reference key="15">
    <citation type="journal article" date="2007" name="Am. J. Hum. Genet.">
        <title>RAB23 mutations in Carpenter syndrome imply an unexpected role for hedgehog signaling in cranial-suture development and obesity.</title>
        <authorList>
            <person name="Jenkins D."/>
            <person name="Seelow D."/>
            <person name="Jehee F.S."/>
            <person name="Perlyn C.A."/>
            <person name="Alonso L.G."/>
            <person name="Bueno D.F."/>
            <person name="Donnai D."/>
            <person name="Josifiova D."/>
            <person name="Mathijssen I.M.J."/>
            <person name="Morton J.E.V."/>
            <person name="Orstavik K.H."/>
            <person name="Sweeney E."/>
            <person name="Wall S.A."/>
            <person name="Marsh J.L."/>
            <person name="Nuernberg P."/>
            <person name="Passos-Bueno M.R."/>
            <person name="Wilkie A.O.M."/>
        </authorList>
    </citation>
    <scope>VARIANTS VAL-13 DEL; ARG-40 AND ALA-101</scope>
    <scope>VARIANT CRPT1 ARG-85</scope>
</reference>
<reference key="16">
    <citation type="journal article" date="2011" name="Hum. Mutat.">
        <title>Carpenter syndrome: extended RAB23 mutation spectrum and analysis of nonsense-mediated mRNA decay.</title>
        <authorList>
            <person name="Jenkins D."/>
            <person name="Baynam G."/>
            <person name="De Catte L."/>
            <person name="Elcioglu N."/>
            <person name="Gabbett M.T."/>
            <person name="Hudgins L."/>
            <person name="Hurst J.A."/>
            <person name="Jehee F.S."/>
            <person name="Oley C."/>
            <person name="Wilkie A.O."/>
        </authorList>
    </citation>
    <scope>VARIANTS CRPT1 LYS-12 AND TYR-79 DEL</scope>
</reference>
<feature type="chain" id="PRO_0000121211" description="Ras-related protein Rab-23">
    <location>
        <begin position="1"/>
        <end position="234"/>
    </location>
</feature>
<feature type="propeptide" id="PRO_0000370771" description="Removed in mature form" evidence="4">
    <location>
        <begin position="235"/>
        <end position="237"/>
    </location>
</feature>
<feature type="region of interest" description="Disordered" evidence="5">
    <location>
        <begin position="188"/>
        <end position="237"/>
    </location>
</feature>
<feature type="short sequence motif" description="Switch 1" evidence="2">
    <location>
        <begin position="28"/>
        <end position="46"/>
    </location>
</feature>
<feature type="short sequence motif" description="Switch 2" evidence="2">
    <location>
        <begin position="65"/>
        <end position="84"/>
    </location>
</feature>
<feature type="compositionally biased region" description="Polar residues" evidence="5">
    <location>
        <begin position="188"/>
        <end position="208"/>
    </location>
</feature>
<feature type="binding site" evidence="2">
    <location>
        <position position="20"/>
    </location>
    <ligand>
        <name>GTP</name>
        <dbReference type="ChEBI" id="CHEBI:37565"/>
    </ligand>
</feature>
<feature type="binding site" evidence="2">
    <location>
        <position position="21"/>
    </location>
    <ligand>
        <name>GTP</name>
        <dbReference type="ChEBI" id="CHEBI:37565"/>
    </ligand>
</feature>
<feature type="binding site" evidence="2">
    <location>
        <position position="22"/>
    </location>
    <ligand>
        <name>GTP</name>
        <dbReference type="ChEBI" id="CHEBI:37565"/>
    </ligand>
</feature>
<feature type="binding site" evidence="2">
    <location>
        <position position="23"/>
    </location>
    <ligand>
        <name>GTP</name>
        <dbReference type="ChEBI" id="CHEBI:37565"/>
    </ligand>
</feature>
<feature type="binding site" evidence="3">
    <location>
        <position position="23"/>
    </location>
    <ligand>
        <name>Mg(2+)</name>
        <dbReference type="ChEBI" id="CHEBI:18420"/>
    </ligand>
</feature>
<feature type="binding site" evidence="2">
    <location>
        <position position="24"/>
    </location>
    <ligand>
        <name>GTP</name>
        <dbReference type="ChEBI" id="CHEBI:37565"/>
    </ligand>
</feature>
<feature type="binding site" evidence="2">
    <location>
        <position position="38"/>
    </location>
    <ligand>
        <name>GTP</name>
        <dbReference type="ChEBI" id="CHEBI:37565"/>
    </ligand>
</feature>
<feature type="binding site" evidence="2">
    <location>
        <position position="41"/>
    </location>
    <ligand>
        <name>GTP</name>
        <dbReference type="ChEBI" id="CHEBI:37565"/>
    </ligand>
</feature>
<feature type="binding site" evidence="2">
    <location>
        <position position="41"/>
    </location>
    <ligand>
        <name>Mg(2+)</name>
        <dbReference type="ChEBI" id="CHEBI:18420"/>
    </ligand>
</feature>
<feature type="binding site" evidence="3">
    <location>
        <position position="64"/>
    </location>
    <ligand>
        <name>Mg(2+)</name>
        <dbReference type="ChEBI" id="CHEBI:18420"/>
    </ligand>
</feature>
<feature type="binding site" evidence="2">
    <location>
        <position position="67"/>
    </location>
    <ligand>
        <name>GTP</name>
        <dbReference type="ChEBI" id="CHEBI:37565"/>
    </ligand>
</feature>
<feature type="binding site" evidence="2">
    <location>
        <position position="121"/>
    </location>
    <ligand>
        <name>GTP</name>
        <dbReference type="ChEBI" id="CHEBI:37565"/>
    </ligand>
</feature>
<feature type="binding site" evidence="2">
    <location>
        <position position="122"/>
    </location>
    <ligand>
        <name>GTP</name>
        <dbReference type="ChEBI" id="CHEBI:37565"/>
    </ligand>
</feature>
<feature type="binding site" evidence="2">
    <location>
        <position position="124"/>
    </location>
    <ligand>
        <name>GTP</name>
        <dbReference type="ChEBI" id="CHEBI:37565"/>
    </ligand>
</feature>
<feature type="binding site" evidence="2">
    <location>
        <position position="151"/>
    </location>
    <ligand>
        <name>GTP</name>
        <dbReference type="ChEBI" id="CHEBI:37565"/>
    </ligand>
</feature>
<feature type="binding site" evidence="2">
    <location>
        <position position="152"/>
    </location>
    <ligand>
        <name>GTP</name>
        <dbReference type="ChEBI" id="CHEBI:37565"/>
    </ligand>
</feature>
<feature type="binding site" evidence="2">
    <location>
        <position position="153"/>
    </location>
    <ligand>
        <name>GTP</name>
        <dbReference type="ChEBI" id="CHEBI:37565"/>
    </ligand>
</feature>
<feature type="modified residue" description="Phosphoserine" evidence="15">
    <location>
        <position position="186"/>
    </location>
</feature>
<feature type="modified residue" description="Phosphoserine" evidence="15">
    <location>
        <position position="187"/>
    </location>
</feature>
<feature type="modified residue" description="Cysteine methyl ester" evidence="4">
    <location>
        <position position="234"/>
    </location>
</feature>
<feature type="lipid moiety-binding region" description="S-geranylgeranyl cysteine" evidence="1">
    <location>
        <position position="234"/>
    </location>
</feature>
<feature type="sequence variant" id="VAR_065294" description="In CRPT1." evidence="9">
    <original>M</original>
    <variation>K</variation>
    <location>
        <position position="12"/>
    </location>
</feature>
<feature type="sequence variant" id="VAR_034900" evidence="7">
    <location>
        <position position="13"/>
    </location>
</feature>
<feature type="sequence variant" id="VAR_034901" description="In dbSNP:rs45442500." evidence="7">
    <original>K</original>
    <variation>R</variation>
    <location>
        <position position="40"/>
    </location>
</feature>
<feature type="sequence variant" id="VAR_065295" description="In CRPT1." evidence="9">
    <location>
        <position position="79"/>
    </location>
</feature>
<feature type="sequence variant" id="VAR_034902" description="In CRPT1." evidence="7">
    <original>C</original>
    <variation>R</variation>
    <location>
        <position position="85"/>
    </location>
</feature>
<feature type="sequence variant" id="VAR_034903" description="In dbSNP:rs45479896." evidence="7">
    <original>S</original>
    <variation>A</variation>
    <location>
        <position position="101"/>
    </location>
</feature>
<feature type="sequence variant" id="VAR_017159" description="In dbSNP:rs1040461." evidence="6 12">
    <original>G</original>
    <variation>S</variation>
    <location>
        <position position="207"/>
    </location>
</feature>
<feature type="sequence conflict" description="In Ref. 3; AAF29101." evidence="13" ref="3">
    <original>E</original>
    <variation>G</variation>
    <location>
        <position position="95"/>
    </location>
</feature>
<feature type="sequence conflict" description="In Ref. 3; AAF29101." evidence="13" ref="3">
    <original>K</original>
    <variation>R</variation>
    <location>
        <position position="144"/>
    </location>
</feature>
<feature type="sequence conflict" description="In Ref. 3; AAF29101." evidence="13" ref="3">
    <original>K</original>
    <variation>N</variation>
    <location>
        <position position="225"/>
    </location>
</feature>
<feature type="strand" evidence="16">
    <location>
        <begin position="7"/>
        <end position="15"/>
    </location>
</feature>
<feature type="helix" evidence="16">
    <location>
        <begin position="22"/>
        <end position="31"/>
    </location>
</feature>
<feature type="strand" evidence="16">
    <location>
        <begin position="43"/>
        <end position="53"/>
    </location>
</feature>
<feature type="strand" evidence="16">
    <location>
        <begin position="56"/>
        <end position="64"/>
    </location>
</feature>
<feature type="helix" evidence="17">
    <location>
        <begin position="68"/>
        <end position="70"/>
    </location>
</feature>
<feature type="helix" evidence="16">
    <location>
        <begin position="72"/>
        <end position="79"/>
    </location>
</feature>
<feature type="strand" evidence="16">
    <location>
        <begin position="84"/>
        <end position="90"/>
    </location>
</feature>
<feature type="helix" evidence="16">
    <location>
        <begin position="94"/>
        <end position="98"/>
    </location>
</feature>
<feature type="helix" evidence="16">
    <location>
        <begin position="100"/>
        <end position="110"/>
    </location>
</feature>
<feature type="strand" evidence="16">
    <location>
        <begin position="116"/>
        <end position="121"/>
    </location>
</feature>
<feature type="helix" evidence="16">
    <location>
        <begin position="123"/>
        <end position="128"/>
    </location>
</feature>
<feature type="helix" evidence="16">
    <location>
        <begin position="133"/>
        <end position="143"/>
    </location>
</feature>
<feature type="strand" evidence="16">
    <location>
        <begin position="146"/>
        <end position="149"/>
    </location>
</feature>
<feature type="turn" evidence="16">
    <location>
        <begin position="152"/>
        <end position="155"/>
    </location>
</feature>
<feature type="strand" evidence="16">
    <location>
        <begin position="156"/>
        <end position="158"/>
    </location>
</feature>
<feature type="helix" evidence="16">
    <location>
        <begin position="159"/>
        <end position="170"/>
    </location>
</feature>
<gene>
    <name evidence="14" type="primary">RAB23</name>
    <name type="ORF">HSPC137</name>
</gene>
<keyword id="KW-0002">3D-structure</keyword>
<keyword id="KW-1003">Cell membrane</keyword>
<keyword id="KW-0989">Craniosynostosis</keyword>
<keyword id="KW-0963">Cytoplasm</keyword>
<keyword id="KW-0968">Cytoplasmic vesicle</keyword>
<keyword id="KW-0217">Developmental protein</keyword>
<keyword id="KW-0225">Disease variant</keyword>
<keyword id="KW-0967">Endosome</keyword>
<keyword id="KW-0342">GTP-binding</keyword>
<keyword id="KW-0378">Hydrolase</keyword>
<keyword id="KW-0449">Lipoprotein</keyword>
<keyword id="KW-0460">Magnesium</keyword>
<keyword id="KW-0472">Membrane</keyword>
<keyword id="KW-0479">Metal-binding</keyword>
<keyword id="KW-0488">Methylation</keyword>
<keyword id="KW-0547">Nucleotide-binding</keyword>
<keyword id="KW-0597">Phosphoprotein</keyword>
<keyword id="KW-0636">Prenylation</keyword>
<keyword id="KW-0653">Protein transport</keyword>
<keyword id="KW-1267">Proteomics identification</keyword>
<keyword id="KW-1185">Reference proteome</keyword>
<keyword id="KW-0813">Transport</keyword>
<comment type="function">
    <text evidence="10 11">The small GTPases Rab are key regulators of intracellular membrane trafficking, from the formation of transport vesicles to their fusion with membranes. Rabs cycle between an inactive GDP-bound form and an active GTP-bound form that is able to recruit to membranes different set of downstream effectors directly responsible for vesicle formation, movement, tethering and fusion. Together with SUFU, prevents nuclear import of GLI1, and thereby inhibits GLI1 transcription factor activity. Regulates GLI1 in differentiating chondrocytes. Likewise, regulates GLI3 proteolytic processing and modulates GLI2 and GLI3 transcription factor activity. Plays a role in autophagic vacuole assembly, and mediates defense against pathogens, such as S.aureus, by promoting their capture by autophagosomes that then merge with lysosomes.</text>
</comment>
<comment type="catalytic activity">
    <reaction evidence="10">
        <text>GTP + H2O = GDP + phosphate + H(+)</text>
        <dbReference type="Rhea" id="RHEA:19669"/>
        <dbReference type="ChEBI" id="CHEBI:15377"/>
        <dbReference type="ChEBI" id="CHEBI:15378"/>
        <dbReference type="ChEBI" id="CHEBI:37565"/>
        <dbReference type="ChEBI" id="CHEBI:43474"/>
        <dbReference type="ChEBI" id="CHEBI:58189"/>
        <dbReference type="EC" id="3.6.5.2"/>
    </reaction>
    <physiologicalReaction direction="left-to-right" evidence="10">
        <dbReference type="Rhea" id="RHEA:19670"/>
    </physiologicalReaction>
</comment>
<comment type="cofactor">
    <cofactor evidence="3">
        <name>Mg(2+)</name>
        <dbReference type="ChEBI" id="CHEBI:18420"/>
    </cofactor>
</comment>
<comment type="activity regulation">
    <text evidence="13">Regulated by guanine nucleotide exchange factors (GEFs) which promote the exchange of bound GDP for free GTP (Probable). Regulated by GTPase activating proteins (GAPs) which increase the GTP hydrolysis activity (Probable). Inhibited by GDP dissociation inhibitors (GDIs) (Probable).</text>
</comment>
<comment type="subunit">
    <text evidence="10">Interacts with SUFU.</text>
</comment>
<comment type="subcellular location">
    <subcellularLocation>
        <location evidence="3">Cell membrane</location>
        <topology evidence="13">Lipid-anchor</topology>
        <orientation evidence="3">Cytoplasmic side</orientation>
    </subcellularLocation>
    <subcellularLocation>
        <location evidence="10">Cytoplasm</location>
    </subcellularLocation>
    <subcellularLocation>
        <location evidence="11">Cytoplasmic vesicle</location>
        <location evidence="11">Autophagosome</location>
    </subcellularLocation>
    <subcellularLocation>
        <location evidence="1 3">Endosome membrane</location>
    </subcellularLocation>
    <subcellularLocation>
        <location evidence="8">Cytoplasmic vesicle</location>
        <location evidence="8">Phagosome</location>
    </subcellularLocation>
    <subcellularLocation>
        <location evidence="13">Cytoplasmic vesicle</location>
        <location evidence="13">Phagosome membrane</location>
        <topology evidence="13">Lipid-anchor</topology>
        <orientation evidence="13">Cytoplasmic side</orientation>
    </subcellularLocation>
    <text evidence="8">Recruited to phagosomes containing S.aureus or M.tuberculosis.</text>
</comment>
<comment type="domain">
    <text evidence="2">Switch 1, switch 2 and the interswitch regions are characteristic of Rab GTPases and mediate the interactions with Rab downstream effectors. The switch regions undergo conformational changes upon nucleotide binding which drives interaction with specific sets of effector proteins, with most effectors only binding to GTP-bound Rab.</text>
</comment>
<comment type="disease" evidence="7 9">
    <disease id="DI-01325">
        <name>Carpenter syndrome 1</name>
        <acronym>CRPT1</acronym>
        <description>A rare autosomal recessive disorder characterized by acrocephaly with variable synostosis of the sagittal, lambdoid, and coronal sutures; peculiar facies; brachydactyly of the hands with syndactyly; preaxial polydactyly and syndactyly of the feet; congenital heart defects; growth retardation; intellectual disability; hypogenitalism; and obesity. In addition, cerebral malformations, oral and dental abnormalities, coxa valga, genu valgum, hydronephrosis, precocious puberty, and hearing loss may be observed.</description>
        <dbReference type="MIM" id="201000"/>
    </disease>
    <text>The disease is caused by variants affecting the gene represented in this entry.</text>
</comment>
<comment type="similarity">
    <text evidence="13">Belongs to the small GTPase superfamily. Rab family.</text>
</comment>
<sequence length="237" mass="26659">MLEEDMEVAIKMVVVGNGAVGKSSMIQRYCKGIFTKDYKKTIGVDFLERQIQVNDEDVRLMLWDTAGQEEFDAITKAYYRGAQACVLVFSTTDRESFEAVSSWREKVVAEVGDIPTVLVQNKIDLLDDSCIKNEEAEALAKRLKLRFYRTSVKEDLNVNEVFKYLAEKYLQKLKQQIAEDPELTHSSSNKIGVFNTSGGSHSGQNSGTLNGGDVINLRPNKQRTKKNRNPFSSCSIP</sequence>
<name>RAB23_HUMAN</name>
<organism>
    <name type="scientific">Homo sapiens</name>
    <name type="common">Human</name>
    <dbReference type="NCBI Taxonomy" id="9606"/>
    <lineage>
        <taxon>Eukaryota</taxon>
        <taxon>Metazoa</taxon>
        <taxon>Chordata</taxon>
        <taxon>Craniata</taxon>
        <taxon>Vertebrata</taxon>
        <taxon>Euteleostomi</taxon>
        <taxon>Mammalia</taxon>
        <taxon>Eutheria</taxon>
        <taxon>Euarchontoglires</taxon>
        <taxon>Primates</taxon>
        <taxon>Haplorrhini</taxon>
        <taxon>Catarrhini</taxon>
        <taxon>Hominidae</taxon>
        <taxon>Homo</taxon>
    </lineage>
</organism>
<proteinExistence type="evidence at protein level"/>
<protein>
    <recommendedName>
        <fullName>Ras-related protein Rab-23</fullName>
        <ecNumber evidence="10">3.6.5.2</ecNumber>
    </recommendedName>
</protein>
<dbReference type="EC" id="3.6.5.2" evidence="10"/>
<dbReference type="EMBL" id="AB034244">
    <property type="protein sequence ID" value="BAA87324.1"/>
    <property type="molecule type" value="mRNA"/>
</dbReference>
<dbReference type="EMBL" id="AB025427">
    <property type="protein sequence ID" value="BAB40309.1"/>
    <property type="molecule type" value="mRNA"/>
</dbReference>
<dbReference type="EMBL" id="AF161486">
    <property type="protein sequence ID" value="AAF29101.1"/>
    <property type="molecule type" value="mRNA"/>
</dbReference>
<dbReference type="EMBL" id="AF498951">
    <property type="protein sequence ID" value="AAM21099.1"/>
    <property type="molecule type" value="mRNA"/>
</dbReference>
<dbReference type="EMBL" id="AK313796">
    <property type="protein sequence ID" value="BAG36532.1"/>
    <property type="molecule type" value="mRNA"/>
</dbReference>
<dbReference type="EMBL" id="AY585189">
    <property type="protein sequence ID" value="AAT79492.1"/>
    <property type="molecule type" value="mRNA"/>
</dbReference>
<dbReference type="EMBL" id="CR749371">
    <property type="protein sequence ID" value="CAH18224.1"/>
    <property type="molecule type" value="mRNA"/>
</dbReference>
<dbReference type="EMBL" id="AL031321">
    <property type="status" value="NOT_ANNOTATED_CDS"/>
    <property type="molecule type" value="Genomic_DNA"/>
</dbReference>
<dbReference type="EMBL" id="CH471081">
    <property type="protein sequence ID" value="EAX04476.1"/>
    <property type="molecule type" value="Genomic_DNA"/>
</dbReference>
<dbReference type="EMBL" id="BC015021">
    <property type="protein sequence ID" value="AAH15021.1"/>
    <property type="molecule type" value="mRNA"/>
</dbReference>
<dbReference type="CCDS" id="CCDS4962.1"/>
<dbReference type="RefSeq" id="NP_001265595.1">
    <property type="nucleotide sequence ID" value="NM_001278666.2"/>
</dbReference>
<dbReference type="RefSeq" id="NP_001265596.1">
    <property type="nucleotide sequence ID" value="NM_001278667.2"/>
</dbReference>
<dbReference type="RefSeq" id="NP_001265597.1">
    <property type="nucleotide sequence ID" value="NM_001278668.2"/>
</dbReference>
<dbReference type="RefSeq" id="NP_057361.3">
    <property type="nucleotide sequence ID" value="NM_016277.4"/>
</dbReference>
<dbReference type="RefSeq" id="NP_899050.1">
    <property type="nucleotide sequence ID" value="NM_183227.3"/>
</dbReference>
<dbReference type="RefSeq" id="XP_054211572.1">
    <property type="nucleotide sequence ID" value="XM_054355597.1"/>
</dbReference>
<dbReference type="PDB" id="8YIM">
    <property type="method" value="X-ray"/>
    <property type="resolution" value="1.35 A"/>
    <property type="chains" value="A=7-172"/>
</dbReference>
<dbReference type="PDB" id="8YL3">
    <property type="method" value="X-ray"/>
    <property type="resolution" value="1.20 A"/>
    <property type="chains" value="A=7-172"/>
</dbReference>
<dbReference type="PDB" id="8YNR">
    <property type="method" value="X-ray"/>
    <property type="resolution" value="1.80 A"/>
    <property type="chains" value="A=7-172"/>
</dbReference>
<dbReference type="PDB" id="8YO0">
    <property type="method" value="X-ray"/>
    <property type="resolution" value="1.30 A"/>
    <property type="chains" value="A=7-172"/>
</dbReference>
<dbReference type="PDB" id="8YP0">
    <property type="method" value="X-ray"/>
    <property type="resolution" value="1.88 A"/>
    <property type="chains" value="A=7-172"/>
</dbReference>
<dbReference type="PDBsum" id="8YIM"/>
<dbReference type="PDBsum" id="8YL3"/>
<dbReference type="PDBsum" id="8YNR"/>
<dbReference type="PDBsum" id="8YO0"/>
<dbReference type="PDBsum" id="8YP0"/>
<dbReference type="SMR" id="Q9ULC3"/>
<dbReference type="BioGRID" id="119694">
    <property type="interactions" value="60"/>
</dbReference>
<dbReference type="CORUM" id="Q9ULC3"/>
<dbReference type="FunCoup" id="Q9ULC3">
    <property type="interactions" value="1510"/>
</dbReference>
<dbReference type="IntAct" id="Q9ULC3">
    <property type="interactions" value="20"/>
</dbReference>
<dbReference type="MINT" id="Q9ULC3"/>
<dbReference type="STRING" id="9606.ENSP00000417610"/>
<dbReference type="GlyGen" id="Q9ULC3">
    <property type="glycosylation" value="1 site, 1 N-linked glycan (1 site)"/>
</dbReference>
<dbReference type="iPTMnet" id="Q9ULC3"/>
<dbReference type="PhosphoSitePlus" id="Q9ULC3"/>
<dbReference type="SwissPalm" id="Q9ULC3"/>
<dbReference type="BioMuta" id="RAB23"/>
<dbReference type="DMDM" id="12643897"/>
<dbReference type="jPOST" id="Q9ULC3"/>
<dbReference type="MassIVE" id="Q9ULC3"/>
<dbReference type="PaxDb" id="9606-ENSP00000417610"/>
<dbReference type="PeptideAtlas" id="Q9ULC3"/>
<dbReference type="ProteomicsDB" id="84975"/>
<dbReference type="Pumba" id="Q9ULC3"/>
<dbReference type="Antibodypedia" id="31144">
    <property type="antibodies" value="310 antibodies from 33 providers"/>
</dbReference>
<dbReference type="DNASU" id="51715"/>
<dbReference type="Ensembl" id="ENST00000317483.4">
    <property type="protein sequence ID" value="ENSP00000320413.3"/>
    <property type="gene ID" value="ENSG00000112210.12"/>
</dbReference>
<dbReference type="Ensembl" id="ENST00000468148.6">
    <property type="protein sequence ID" value="ENSP00000417610.1"/>
    <property type="gene ID" value="ENSG00000112210.12"/>
</dbReference>
<dbReference type="GeneID" id="51715"/>
<dbReference type="KEGG" id="hsa:51715"/>
<dbReference type="MANE-Select" id="ENST00000468148.6">
    <property type="protein sequence ID" value="ENSP00000417610.1"/>
    <property type="RefSeq nucleotide sequence ID" value="NM_016277.5"/>
    <property type="RefSeq protein sequence ID" value="NP_057361.3"/>
</dbReference>
<dbReference type="UCSC" id="uc003pds.5">
    <property type="organism name" value="human"/>
</dbReference>
<dbReference type="AGR" id="HGNC:14263"/>
<dbReference type="CTD" id="51715"/>
<dbReference type="DisGeNET" id="51715"/>
<dbReference type="GeneCards" id="RAB23"/>
<dbReference type="HGNC" id="HGNC:14263">
    <property type="gene designation" value="RAB23"/>
</dbReference>
<dbReference type="HPA" id="ENSG00000112210">
    <property type="expression patterns" value="Low tissue specificity"/>
</dbReference>
<dbReference type="MalaCards" id="RAB23"/>
<dbReference type="MIM" id="201000">
    <property type="type" value="phenotype"/>
</dbReference>
<dbReference type="MIM" id="606144">
    <property type="type" value="gene"/>
</dbReference>
<dbReference type="neXtProt" id="NX_Q9ULC3"/>
<dbReference type="OpenTargets" id="ENSG00000112210"/>
<dbReference type="Orphanet" id="65759">
    <property type="disease" value="Carpenter syndrome"/>
</dbReference>
<dbReference type="PharmGKB" id="PA34113"/>
<dbReference type="VEuPathDB" id="HostDB:ENSG00000112210"/>
<dbReference type="eggNOG" id="KOG4252">
    <property type="taxonomic scope" value="Eukaryota"/>
</dbReference>
<dbReference type="GeneTree" id="ENSGT00940000155064"/>
<dbReference type="HOGENOM" id="CLU_041217_10_6_1"/>
<dbReference type="InParanoid" id="Q9ULC3"/>
<dbReference type="OMA" id="KGIFTHA"/>
<dbReference type="OrthoDB" id="6585768at2759"/>
<dbReference type="PAN-GO" id="Q9ULC3">
    <property type="GO annotations" value="6 GO annotations based on evolutionary models"/>
</dbReference>
<dbReference type="PhylomeDB" id="Q9ULC3"/>
<dbReference type="TreeFam" id="TF317494"/>
<dbReference type="PathwayCommons" id="Q9ULC3"/>
<dbReference type="Reactome" id="R-HSA-8873719">
    <property type="pathway name" value="RAB geranylgeranylation"/>
</dbReference>
<dbReference type="SignaLink" id="Q9ULC3"/>
<dbReference type="SIGNOR" id="Q9ULC3"/>
<dbReference type="BioGRID-ORCS" id="51715">
    <property type="hits" value="14 hits in 1163 CRISPR screens"/>
</dbReference>
<dbReference type="ChiTaRS" id="RAB23">
    <property type="organism name" value="human"/>
</dbReference>
<dbReference type="GeneWiki" id="RAB23"/>
<dbReference type="GenomeRNAi" id="51715"/>
<dbReference type="Pharos" id="Q9ULC3">
    <property type="development level" value="Tbio"/>
</dbReference>
<dbReference type="PRO" id="PR:Q9ULC3"/>
<dbReference type="Proteomes" id="UP000005640">
    <property type="component" value="Chromosome 6"/>
</dbReference>
<dbReference type="RNAct" id="Q9ULC3">
    <property type="molecule type" value="protein"/>
</dbReference>
<dbReference type="Bgee" id="ENSG00000112210">
    <property type="expression patterns" value="Expressed in cauda epididymis and 187 other cell types or tissues"/>
</dbReference>
<dbReference type="ExpressionAtlas" id="Q9ULC3">
    <property type="expression patterns" value="baseline and differential"/>
</dbReference>
<dbReference type="GO" id="GO:0005776">
    <property type="term" value="C:autophagosome"/>
    <property type="evidence" value="ECO:0000314"/>
    <property type="project" value="UniProtKB"/>
</dbReference>
<dbReference type="GO" id="GO:0030054">
    <property type="term" value="C:cell junction"/>
    <property type="evidence" value="ECO:0000314"/>
    <property type="project" value="HPA"/>
</dbReference>
<dbReference type="GO" id="GO:0005813">
    <property type="term" value="C:centrosome"/>
    <property type="evidence" value="ECO:0000314"/>
    <property type="project" value="HPA"/>
</dbReference>
<dbReference type="GO" id="GO:0036064">
    <property type="term" value="C:ciliary basal body"/>
    <property type="evidence" value="ECO:0000314"/>
    <property type="project" value="HPA"/>
</dbReference>
<dbReference type="GO" id="GO:0005929">
    <property type="term" value="C:cilium"/>
    <property type="evidence" value="ECO:0000314"/>
    <property type="project" value="HPA"/>
</dbReference>
<dbReference type="GO" id="GO:0005737">
    <property type="term" value="C:cytoplasm"/>
    <property type="evidence" value="ECO:0000314"/>
    <property type="project" value="UniProtKB"/>
</dbReference>
<dbReference type="GO" id="GO:0005829">
    <property type="term" value="C:cytosol"/>
    <property type="evidence" value="ECO:0000314"/>
    <property type="project" value="HPA"/>
</dbReference>
<dbReference type="GO" id="GO:0012505">
    <property type="term" value="C:endomembrane system"/>
    <property type="evidence" value="ECO:0000318"/>
    <property type="project" value="GO_Central"/>
</dbReference>
<dbReference type="GO" id="GO:0010008">
    <property type="term" value="C:endosome membrane"/>
    <property type="evidence" value="ECO:0000318"/>
    <property type="project" value="GO_Central"/>
</dbReference>
<dbReference type="GO" id="GO:0045335">
    <property type="term" value="C:phagocytic vesicle"/>
    <property type="evidence" value="ECO:0000314"/>
    <property type="project" value="UniProtKB"/>
</dbReference>
<dbReference type="GO" id="GO:0030670">
    <property type="term" value="C:phagocytic vesicle membrane"/>
    <property type="evidence" value="ECO:0007669"/>
    <property type="project" value="UniProtKB-SubCell"/>
</dbReference>
<dbReference type="GO" id="GO:0005886">
    <property type="term" value="C:plasma membrane"/>
    <property type="evidence" value="ECO:0000314"/>
    <property type="project" value="UniProtKB"/>
</dbReference>
<dbReference type="GO" id="GO:0005525">
    <property type="term" value="F:GTP binding"/>
    <property type="evidence" value="ECO:0007669"/>
    <property type="project" value="UniProtKB-KW"/>
</dbReference>
<dbReference type="GO" id="GO:0003924">
    <property type="term" value="F:GTPase activity"/>
    <property type="evidence" value="ECO:0000314"/>
    <property type="project" value="UniProtKB"/>
</dbReference>
<dbReference type="GO" id="GO:0000045">
    <property type="term" value="P:autophagosome assembly"/>
    <property type="evidence" value="ECO:0000315"/>
    <property type="project" value="UniProtKB"/>
</dbReference>
<dbReference type="GO" id="GO:0006968">
    <property type="term" value="P:cellular defense response"/>
    <property type="evidence" value="ECO:0000315"/>
    <property type="project" value="UniProtKB"/>
</dbReference>
<dbReference type="GO" id="GO:0060271">
    <property type="term" value="P:cilium assembly"/>
    <property type="evidence" value="ECO:0000315"/>
    <property type="project" value="UniProtKB"/>
</dbReference>
<dbReference type="GO" id="GO:0097094">
    <property type="term" value="P:craniofacial suture morphogenesis"/>
    <property type="evidence" value="ECO:0000315"/>
    <property type="project" value="UniProtKB"/>
</dbReference>
<dbReference type="GO" id="GO:0046039">
    <property type="term" value="P:GTP metabolic process"/>
    <property type="evidence" value="ECO:0000314"/>
    <property type="project" value="UniProtKB"/>
</dbReference>
<dbReference type="GO" id="GO:0006886">
    <property type="term" value="P:intracellular protein transport"/>
    <property type="evidence" value="ECO:0000318"/>
    <property type="project" value="GO_Central"/>
</dbReference>
<dbReference type="GO" id="GO:0042308">
    <property type="term" value="P:negative regulation of protein import into nucleus"/>
    <property type="evidence" value="ECO:0000315"/>
    <property type="project" value="UniProtKB"/>
</dbReference>
<dbReference type="CDD" id="cd04106">
    <property type="entry name" value="Rab23_like"/>
    <property type="match status" value="1"/>
</dbReference>
<dbReference type="FunFam" id="3.40.50.300:FF:000669">
    <property type="entry name" value="Ras-related protein Rab-23"/>
    <property type="match status" value="1"/>
</dbReference>
<dbReference type="Gene3D" id="3.40.50.300">
    <property type="entry name" value="P-loop containing nucleotide triphosphate hydrolases"/>
    <property type="match status" value="1"/>
</dbReference>
<dbReference type="InterPro" id="IPR027417">
    <property type="entry name" value="P-loop_NTPase"/>
</dbReference>
<dbReference type="InterPro" id="IPR050227">
    <property type="entry name" value="Rab"/>
</dbReference>
<dbReference type="InterPro" id="IPR034114">
    <property type="entry name" value="Rab23"/>
</dbReference>
<dbReference type="InterPro" id="IPR005225">
    <property type="entry name" value="Small_GTP-bd"/>
</dbReference>
<dbReference type="InterPro" id="IPR001806">
    <property type="entry name" value="Small_GTPase"/>
</dbReference>
<dbReference type="NCBIfam" id="TIGR00231">
    <property type="entry name" value="small_GTP"/>
    <property type="match status" value="1"/>
</dbReference>
<dbReference type="PANTHER" id="PTHR47977">
    <property type="entry name" value="RAS-RELATED PROTEIN RAB"/>
    <property type="match status" value="1"/>
</dbReference>
<dbReference type="Pfam" id="PF00071">
    <property type="entry name" value="Ras"/>
    <property type="match status" value="1"/>
</dbReference>
<dbReference type="PRINTS" id="PR00449">
    <property type="entry name" value="RASTRNSFRMNG"/>
</dbReference>
<dbReference type="SMART" id="SM00175">
    <property type="entry name" value="RAB"/>
    <property type="match status" value="1"/>
</dbReference>
<dbReference type="SMART" id="SM00176">
    <property type="entry name" value="RAN"/>
    <property type="match status" value="1"/>
</dbReference>
<dbReference type="SMART" id="SM00173">
    <property type="entry name" value="RAS"/>
    <property type="match status" value="1"/>
</dbReference>
<dbReference type="SMART" id="SM00174">
    <property type="entry name" value="RHO"/>
    <property type="match status" value="1"/>
</dbReference>
<dbReference type="SUPFAM" id="SSF52540">
    <property type="entry name" value="P-loop containing nucleoside triphosphate hydrolases"/>
    <property type="match status" value="1"/>
</dbReference>
<dbReference type="PROSITE" id="PS51419">
    <property type="entry name" value="RAB"/>
    <property type="match status" value="1"/>
</dbReference>
<accession>Q9ULC3</accession>
<accession>B2R9I5</accession>
<accession>Q68DJ6</accession>
<accession>Q8NI06</accession>
<accession>Q9P023</accession>
<evidence type="ECO:0000250" key="1"/>
<evidence type="ECO:0000250" key="2">
    <source>
        <dbReference type="UniProtKB" id="P20340"/>
    </source>
</evidence>
<evidence type="ECO:0000250" key="3">
    <source>
        <dbReference type="UniProtKB" id="P35288"/>
    </source>
</evidence>
<evidence type="ECO:0000255" key="4"/>
<evidence type="ECO:0000256" key="5">
    <source>
        <dbReference type="SAM" id="MobiDB-lite"/>
    </source>
</evidence>
<evidence type="ECO:0000269" key="6">
    <source>
    </source>
</evidence>
<evidence type="ECO:0000269" key="7">
    <source>
    </source>
</evidence>
<evidence type="ECO:0000269" key="8">
    <source>
    </source>
</evidence>
<evidence type="ECO:0000269" key="9">
    <source>
    </source>
</evidence>
<evidence type="ECO:0000269" key="10">
    <source>
    </source>
</evidence>
<evidence type="ECO:0000269" key="11">
    <source>
    </source>
</evidence>
<evidence type="ECO:0000269" key="12">
    <source ref="5"/>
</evidence>
<evidence type="ECO:0000305" key="13"/>
<evidence type="ECO:0000312" key="14">
    <source>
        <dbReference type="HGNC" id="HGNC:14263"/>
    </source>
</evidence>
<evidence type="ECO:0007744" key="15">
    <source>
    </source>
</evidence>
<evidence type="ECO:0007829" key="16">
    <source>
        <dbReference type="PDB" id="8YL3"/>
    </source>
</evidence>
<evidence type="ECO:0007829" key="17">
    <source>
        <dbReference type="PDB" id="8YO0"/>
    </source>
</evidence>